<keyword id="KW-1185">Reference proteome</keyword>
<keyword id="KW-0677">Repeat</keyword>
<protein>
    <recommendedName>
        <fullName>Putative pentatricopeptide repeat-containing protein At3g25970</fullName>
    </recommendedName>
</protein>
<dbReference type="EMBL" id="AB023041">
    <property type="protein sequence ID" value="BAB01060.1"/>
    <property type="status" value="ALT_SEQ"/>
    <property type="molecule type" value="Genomic_DNA"/>
</dbReference>
<dbReference type="EMBL" id="CP002686">
    <property type="protein sequence ID" value="AEE77096.1"/>
    <property type="molecule type" value="Genomic_DNA"/>
</dbReference>
<dbReference type="RefSeq" id="NP_189226.2">
    <property type="nucleotide sequence ID" value="NM_113501.3"/>
</dbReference>
<dbReference type="SMR" id="Q9LU94"/>
<dbReference type="FunCoup" id="Q9LU94">
    <property type="interactions" value="153"/>
</dbReference>
<dbReference type="PaxDb" id="3702-AT3G25970.1"/>
<dbReference type="ProteomicsDB" id="249103"/>
<dbReference type="EnsemblPlants" id="AT3G25970.1">
    <property type="protein sequence ID" value="AT3G25970.1"/>
    <property type="gene ID" value="AT3G25970"/>
</dbReference>
<dbReference type="GeneID" id="822194"/>
<dbReference type="Gramene" id="AT3G25970.1">
    <property type="protein sequence ID" value="AT3G25970.1"/>
    <property type="gene ID" value="AT3G25970"/>
</dbReference>
<dbReference type="KEGG" id="ath:AT3G25970"/>
<dbReference type="Araport" id="AT3G25970"/>
<dbReference type="TAIR" id="AT3G25970"/>
<dbReference type="eggNOG" id="KOG4197">
    <property type="taxonomic scope" value="Eukaryota"/>
</dbReference>
<dbReference type="HOGENOM" id="CLU_002706_15_10_1"/>
<dbReference type="InParanoid" id="Q9LU94"/>
<dbReference type="OMA" id="AYSQCGS"/>
<dbReference type="PhylomeDB" id="Q9LU94"/>
<dbReference type="PRO" id="PR:Q9LU94"/>
<dbReference type="Proteomes" id="UP000006548">
    <property type="component" value="Chromosome 3"/>
</dbReference>
<dbReference type="ExpressionAtlas" id="Q9LU94">
    <property type="expression patterns" value="baseline and differential"/>
</dbReference>
<dbReference type="GO" id="GO:0003723">
    <property type="term" value="F:RNA binding"/>
    <property type="evidence" value="ECO:0007669"/>
    <property type="project" value="InterPro"/>
</dbReference>
<dbReference type="GO" id="GO:0009451">
    <property type="term" value="P:RNA modification"/>
    <property type="evidence" value="ECO:0007669"/>
    <property type="project" value="InterPro"/>
</dbReference>
<dbReference type="FunFam" id="1.25.40.10:FF:000381">
    <property type="entry name" value="Pentatricopeptide repeat-containing protein"/>
    <property type="match status" value="1"/>
</dbReference>
<dbReference type="FunFam" id="1.25.40.10:FF:000158">
    <property type="entry name" value="pentatricopeptide repeat-containing protein At2g33680"/>
    <property type="match status" value="1"/>
</dbReference>
<dbReference type="FunFam" id="1.25.40.10:FF:000205">
    <property type="entry name" value="Pentatricopeptide repeat-containing protein, mitochondrial"/>
    <property type="match status" value="1"/>
</dbReference>
<dbReference type="FunFam" id="1.25.40.10:FF:001177">
    <property type="entry name" value="Putative pentatricopeptide repeat-containing protein"/>
    <property type="match status" value="1"/>
</dbReference>
<dbReference type="Gene3D" id="1.25.40.10">
    <property type="entry name" value="Tetratricopeptide repeat domain"/>
    <property type="match status" value="5"/>
</dbReference>
<dbReference type="InterPro" id="IPR046848">
    <property type="entry name" value="E_motif"/>
</dbReference>
<dbReference type="InterPro" id="IPR002885">
    <property type="entry name" value="Pentatricopeptide_rpt"/>
</dbReference>
<dbReference type="InterPro" id="IPR046960">
    <property type="entry name" value="PPR_At4g14850-like_plant"/>
</dbReference>
<dbReference type="InterPro" id="IPR011990">
    <property type="entry name" value="TPR-like_helical_dom_sf"/>
</dbReference>
<dbReference type="NCBIfam" id="TIGR00756">
    <property type="entry name" value="PPR"/>
    <property type="match status" value="4"/>
</dbReference>
<dbReference type="PANTHER" id="PTHR24015">
    <property type="entry name" value="OS07G0578800 PROTEIN-RELATED"/>
    <property type="match status" value="1"/>
</dbReference>
<dbReference type="PANTHER" id="PTHR24015:SF548">
    <property type="entry name" value="OS08G0340900 PROTEIN"/>
    <property type="match status" value="1"/>
</dbReference>
<dbReference type="Pfam" id="PF20431">
    <property type="entry name" value="E_motif"/>
    <property type="match status" value="1"/>
</dbReference>
<dbReference type="Pfam" id="PF01535">
    <property type="entry name" value="PPR"/>
    <property type="match status" value="4"/>
</dbReference>
<dbReference type="Pfam" id="PF13041">
    <property type="entry name" value="PPR_2"/>
    <property type="match status" value="4"/>
</dbReference>
<dbReference type="SUPFAM" id="SSF48452">
    <property type="entry name" value="TPR-like"/>
    <property type="match status" value="1"/>
</dbReference>
<dbReference type="PROSITE" id="PS51375">
    <property type="entry name" value="PPR"/>
    <property type="match status" value="16"/>
</dbReference>
<proteinExistence type="inferred from homology"/>
<feature type="chain" id="PRO_0000356114" description="Putative pentatricopeptide repeat-containing protein At3g25970">
    <location>
        <begin position="1"/>
        <end position="701"/>
    </location>
</feature>
<feature type="repeat" description="PPR 1">
    <location>
        <begin position="34"/>
        <end position="64"/>
    </location>
</feature>
<feature type="repeat" description="PPR 2">
    <location>
        <begin position="65"/>
        <end position="99"/>
    </location>
</feature>
<feature type="repeat" description="PPR 3">
    <location>
        <begin position="100"/>
        <end position="134"/>
    </location>
</feature>
<feature type="repeat" description="PPR 4">
    <location>
        <begin position="135"/>
        <end position="165"/>
    </location>
</feature>
<feature type="repeat" description="PPR 5">
    <location>
        <begin position="166"/>
        <end position="200"/>
    </location>
</feature>
<feature type="repeat" description="PPR 6">
    <location>
        <begin position="202"/>
        <end position="236"/>
    </location>
</feature>
<feature type="repeat" description="PPR 7">
    <location>
        <begin position="237"/>
        <end position="267"/>
    </location>
</feature>
<feature type="repeat" description="PPR 8">
    <location>
        <begin position="269"/>
        <end position="303"/>
    </location>
</feature>
<feature type="repeat" description="PPR 9">
    <location>
        <begin position="304"/>
        <end position="338"/>
    </location>
</feature>
<feature type="repeat" description="PPR 10">
    <location>
        <begin position="339"/>
        <end position="371"/>
    </location>
</feature>
<feature type="repeat" description="PPR 11">
    <location>
        <begin position="372"/>
        <end position="406"/>
    </location>
</feature>
<feature type="repeat" description="PPR 12">
    <location>
        <begin position="407"/>
        <end position="441"/>
    </location>
</feature>
<feature type="repeat" description="PPR 13">
    <location>
        <begin position="442"/>
        <end position="472"/>
    </location>
</feature>
<feature type="repeat" description="PPR 14">
    <location>
        <begin position="474"/>
        <end position="508"/>
    </location>
</feature>
<feature type="repeat" description="PPR 15">
    <location>
        <begin position="509"/>
        <end position="539"/>
    </location>
</feature>
<feature type="repeat" description="PPR 16">
    <location>
        <begin position="545"/>
        <end position="575"/>
    </location>
</feature>
<feature type="region of interest" description="Type E motif">
    <location>
        <begin position="580"/>
        <end position="655"/>
    </location>
</feature>
<feature type="region of interest" description="Type E(+) motif">
    <location>
        <begin position="656"/>
        <end position="686"/>
    </location>
</feature>
<evidence type="ECO:0000305" key="1"/>
<accession>Q9LU94</accession>
<comment type="similarity">
    <text evidence="1">Belongs to the PPR family. PCMP-E subfamily.</text>
</comment>
<comment type="sequence caution" evidence="1">
    <conflict type="erroneous gene model prediction">
        <sequence resource="EMBL-CDS" id="BAB01060"/>
    </conflict>
</comment>
<comment type="online information" name="Pentatricopeptide repeat proteins">
    <link uri="https://ppr.plantenergy.uwa.edu.au"/>
</comment>
<sequence>MKALLASLLESSLNSFQKLSLTHCYAIKCGSISDIYVSNRILDSYIKFGFLGYANMLFDEMPKRDSVSWNTMISGYTSCGKLEDAWCLFTCMKRSGSDVDGYSFSRLLKGIASVKRFDLGEQVHGLVIKGGYECNVYVGSSLVDMYAKCERVEDAFEAFKEISEPNSVSWNALIAGFVQVRDIKTAFWLLGLMEMKAAVTMDAGTFAPLLTLLDDPMFCNLLKQVHAKVLKLGLQHEITICNAMISSYADCGSVSDAKRVFDGLGGSKDLISWNSMIAGFSKHELKESAFELFIQMQRHWVETDIYTYTGLLSACSGEEHQIFGKSLHGMVIKKGLEQVTSATNALISMYIQFPTGTMEDALSLFESLKSKDLISWNSIITGFAQKGLSEDAVKFFSYLRSSEIKVDDYAFSALLRSCSDLATLQLGQQIHALATKSGFVSNEFVISSLIVMYSKCGIIESARKCFQQISSKHSTVAWNAMILGYAQHGLGQVSLDLFSQMCNQNVKLDHVTFTAILTACSHTGLIQEGLELLNLMEPVYKIQPRMEHYAAAVDLLGRAGLVNKAKELIESMPLNPDPMVLKTFLGVCRACGEIEMATQVANHLLEIEPEDHFTYVSLSHMYSDLKKWEEKASVKKMMKERGVKKVPGWSWIEIRNQVKAFNAEDRSNPLCQDIYMMIKDLTQEMQWLDSDNGVDADSLHA</sequence>
<name>PP255_ARATH</name>
<organism>
    <name type="scientific">Arabidopsis thaliana</name>
    <name type="common">Mouse-ear cress</name>
    <dbReference type="NCBI Taxonomy" id="3702"/>
    <lineage>
        <taxon>Eukaryota</taxon>
        <taxon>Viridiplantae</taxon>
        <taxon>Streptophyta</taxon>
        <taxon>Embryophyta</taxon>
        <taxon>Tracheophyta</taxon>
        <taxon>Spermatophyta</taxon>
        <taxon>Magnoliopsida</taxon>
        <taxon>eudicotyledons</taxon>
        <taxon>Gunneridae</taxon>
        <taxon>Pentapetalae</taxon>
        <taxon>rosids</taxon>
        <taxon>malvids</taxon>
        <taxon>Brassicales</taxon>
        <taxon>Brassicaceae</taxon>
        <taxon>Camelineae</taxon>
        <taxon>Arabidopsis</taxon>
    </lineage>
</organism>
<reference key="1">
    <citation type="journal article" date="2000" name="DNA Res.">
        <title>Structural analysis of Arabidopsis thaliana chromosome 3. I. Sequence features of the regions of 4,504,864 bp covered by sixty P1 and TAC clones.</title>
        <authorList>
            <person name="Sato S."/>
            <person name="Nakamura Y."/>
            <person name="Kaneko T."/>
            <person name="Katoh T."/>
            <person name="Asamizu E."/>
            <person name="Tabata S."/>
        </authorList>
    </citation>
    <scope>NUCLEOTIDE SEQUENCE [LARGE SCALE GENOMIC DNA]</scope>
    <source>
        <strain>cv. Columbia</strain>
    </source>
</reference>
<reference key="2">
    <citation type="journal article" date="2017" name="Plant J.">
        <title>Araport11: a complete reannotation of the Arabidopsis thaliana reference genome.</title>
        <authorList>
            <person name="Cheng C.Y."/>
            <person name="Krishnakumar V."/>
            <person name="Chan A.P."/>
            <person name="Thibaud-Nissen F."/>
            <person name="Schobel S."/>
            <person name="Town C.D."/>
        </authorList>
    </citation>
    <scope>GENOME REANNOTATION</scope>
    <source>
        <strain>cv. Columbia</strain>
    </source>
</reference>
<reference key="3">
    <citation type="journal article" date="2000" name="Plant Mol. Biol.">
        <title>In Arabidopsis thaliana, 1% of the genome codes for a novel protein family unique to plants.</title>
        <authorList>
            <person name="Aubourg S."/>
            <person name="Boudet N."/>
            <person name="Kreis M."/>
            <person name="Lecharny A."/>
        </authorList>
    </citation>
    <scope>GENE FAMILY</scope>
</reference>
<reference key="4">
    <citation type="journal article" date="2004" name="Plant Cell">
        <title>Genome-wide analysis of Arabidopsis pentatricopeptide repeat proteins reveals their essential role in organelle biogenesis.</title>
        <authorList>
            <person name="Lurin C."/>
            <person name="Andres C."/>
            <person name="Aubourg S."/>
            <person name="Bellaoui M."/>
            <person name="Bitton F."/>
            <person name="Bruyere C."/>
            <person name="Caboche M."/>
            <person name="Debast C."/>
            <person name="Gualberto J."/>
            <person name="Hoffmann B."/>
            <person name="Lecharny A."/>
            <person name="Le Ret M."/>
            <person name="Martin-Magniette M.-L."/>
            <person name="Mireau H."/>
            <person name="Peeters N."/>
            <person name="Renou J.-P."/>
            <person name="Szurek B."/>
            <person name="Taconnat L."/>
            <person name="Small I."/>
        </authorList>
    </citation>
    <scope>GENE FAMILY</scope>
</reference>
<gene>
    <name type="primary">PCMP-E46</name>
    <name type="ordered locus">At3g25970</name>
    <name type="ORF">MPE11.14</name>
</gene>